<organism>
    <name type="scientific">Oryza sativa subsp. indica</name>
    <name type="common">Rice</name>
    <dbReference type="NCBI Taxonomy" id="39946"/>
    <lineage>
        <taxon>Eukaryota</taxon>
        <taxon>Viridiplantae</taxon>
        <taxon>Streptophyta</taxon>
        <taxon>Embryophyta</taxon>
        <taxon>Tracheophyta</taxon>
        <taxon>Spermatophyta</taxon>
        <taxon>Magnoliopsida</taxon>
        <taxon>Liliopsida</taxon>
        <taxon>Poales</taxon>
        <taxon>Poaceae</taxon>
        <taxon>BOP clade</taxon>
        <taxon>Oryzoideae</taxon>
        <taxon>Oryzeae</taxon>
        <taxon>Oryzinae</taxon>
        <taxon>Oryza</taxon>
        <taxon>Oryza sativa</taxon>
    </lineage>
</organism>
<evidence type="ECO:0000255" key="1"/>
<evidence type="ECO:0000256" key="2">
    <source>
        <dbReference type="SAM" id="MobiDB-lite"/>
    </source>
</evidence>
<evidence type="ECO:0000269" key="3">
    <source>
    </source>
</evidence>
<evidence type="ECO:0000305" key="4"/>
<protein>
    <recommendedName>
        <fullName>Phytosulfokines 1</fullName>
    </recommendedName>
    <component>
        <recommendedName>
            <fullName>Phytosulfokine-alpha</fullName>
            <shortName>PSK-alpha</shortName>
            <shortName>Phytosulfokine-a</shortName>
        </recommendedName>
    </component>
    <component>
        <recommendedName>
            <fullName>Phytosulfokine-beta</fullName>
            <shortName>PSK-beta</shortName>
            <shortName>Phytosulfokine-b</shortName>
        </recommendedName>
    </component>
</protein>
<dbReference type="EMBL" id="AB026837">
    <property type="protein sequence ID" value="BAB19648.1"/>
    <property type="molecule type" value="Genomic_DNA"/>
</dbReference>
<dbReference type="EMBL" id="CM000131">
    <property type="protein sequence ID" value="EAZ01775.1"/>
    <property type="molecule type" value="Genomic_DNA"/>
</dbReference>
<dbReference type="STRING" id="39946.A2YFB4"/>
<dbReference type="GlyCosmos" id="A2YFB4">
    <property type="glycosylation" value="1 site, No reported glycans"/>
</dbReference>
<dbReference type="EnsemblPlants" id="BGIOSGA020829-TA">
    <property type="protein sequence ID" value="BGIOSGA020829-PA"/>
    <property type="gene ID" value="BGIOSGA020829"/>
</dbReference>
<dbReference type="Gramene" id="BGIOSGA020829-TA">
    <property type="protein sequence ID" value="BGIOSGA020829-PA"/>
    <property type="gene ID" value="BGIOSGA020829"/>
</dbReference>
<dbReference type="HOGENOM" id="CLU_153468_0_0_1"/>
<dbReference type="OMA" id="CETARWA"/>
<dbReference type="Proteomes" id="UP000007015">
    <property type="component" value="Chromosome 6"/>
</dbReference>
<dbReference type="GO" id="GO:0005576">
    <property type="term" value="C:extracellular region"/>
    <property type="evidence" value="ECO:0007669"/>
    <property type="project" value="UniProtKB-SubCell"/>
</dbReference>
<dbReference type="GO" id="GO:0008083">
    <property type="term" value="F:growth factor activity"/>
    <property type="evidence" value="ECO:0007669"/>
    <property type="project" value="UniProtKB-KW"/>
</dbReference>
<dbReference type="GO" id="GO:0030154">
    <property type="term" value="P:cell differentiation"/>
    <property type="evidence" value="ECO:0007669"/>
    <property type="project" value="UniProtKB-KW"/>
</dbReference>
<proteinExistence type="evidence at protein level"/>
<sequence>MVNPGRTARALCLLCLALLLLGQDTHSRKLLLQEKHSHGVGNGTTTTQEPSRENGGSTGSNNNGQLQFDSAKWEEFHTDYIYTQDVKNP</sequence>
<keyword id="KW-0217">Developmental protein</keyword>
<keyword id="KW-0221">Differentiation</keyword>
<keyword id="KW-0903">Direct protein sequencing</keyword>
<keyword id="KW-0325">Glycoprotein</keyword>
<keyword id="KW-0339">Growth factor</keyword>
<keyword id="KW-1185">Reference proteome</keyword>
<keyword id="KW-0964">Secreted</keyword>
<keyword id="KW-0732">Signal</keyword>
<keyword id="KW-0765">Sulfation</keyword>
<gene>
    <name type="primary">PSK1</name>
    <name type="synonym">PSK</name>
    <name type="ORF">OsI_023007</name>
</gene>
<name>PSK1_ORYSI</name>
<reference key="1">
    <citation type="journal article" date="2000" name="Plant Mol. Biol.">
        <title>Molecular cloning and characterization of OsPSK, a gene encoding a precursor for phytosulfokine-alpha, required for rice cell proliferation.</title>
        <authorList>
            <person name="Yang H."/>
            <person name="Matsubayashi Y."/>
            <person name="Hanai H."/>
            <person name="Nakamura K."/>
            <person name="Sakagami Y."/>
        </authorList>
    </citation>
    <scope>NUCLEOTIDE SEQUENCE [GENOMIC DNA]</scope>
    <source>
        <strain>cv. C5924</strain>
    </source>
</reference>
<reference key="2">
    <citation type="journal article" date="2005" name="PLoS Biol.">
        <title>The genomes of Oryza sativa: a history of duplications.</title>
        <authorList>
            <person name="Yu J."/>
            <person name="Wang J."/>
            <person name="Lin W."/>
            <person name="Li S."/>
            <person name="Li H."/>
            <person name="Zhou J."/>
            <person name="Ni P."/>
            <person name="Dong W."/>
            <person name="Hu S."/>
            <person name="Zeng C."/>
            <person name="Zhang J."/>
            <person name="Zhang Y."/>
            <person name="Li R."/>
            <person name="Xu Z."/>
            <person name="Li S."/>
            <person name="Li X."/>
            <person name="Zheng H."/>
            <person name="Cong L."/>
            <person name="Lin L."/>
            <person name="Yin J."/>
            <person name="Geng J."/>
            <person name="Li G."/>
            <person name="Shi J."/>
            <person name="Liu J."/>
            <person name="Lv H."/>
            <person name="Li J."/>
            <person name="Wang J."/>
            <person name="Deng Y."/>
            <person name="Ran L."/>
            <person name="Shi X."/>
            <person name="Wang X."/>
            <person name="Wu Q."/>
            <person name="Li C."/>
            <person name="Ren X."/>
            <person name="Wang J."/>
            <person name="Wang X."/>
            <person name="Li D."/>
            <person name="Liu D."/>
            <person name="Zhang X."/>
            <person name="Ji Z."/>
            <person name="Zhao W."/>
            <person name="Sun Y."/>
            <person name="Zhang Z."/>
            <person name="Bao J."/>
            <person name="Han Y."/>
            <person name="Dong L."/>
            <person name="Ji J."/>
            <person name="Chen P."/>
            <person name="Wu S."/>
            <person name="Liu J."/>
            <person name="Xiao Y."/>
            <person name="Bu D."/>
            <person name="Tan J."/>
            <person name="Yang L."/>
            <person name="Ye C."/>
            <person name="Zhang J."/>
            <person name="Xu J."/>
            <person name="Zhou Y."/>
            <person name="Yu Y."/>
            <person name="Zhang B."/>
            <person name="Zhuang S."/>
            <person name="Wei H."/>
            <person name="Liu B."/>
            <person name="Lei M."/>
            <person name="Yu H."/>
            <person name="Li Y."/>
            <person name="Xu H."/>
            <person name="Wei S."/>
            <person name="He X."/>
            <person name="Fang L."/>
            <person name="Zhang Z."/>
            <person name="Zhang Y."/>
            <person name="Huang X."/>
            <person name="Su Z."/>
            <person name="Tong W."/>
            <person name="Li J."/>
            <person name="Tong Z."/>
            <person name="Li S."/>
            <person name="Ye J."/>
            <person name="Wang L."/>
            <person name="Fang L."/>
            <person name="Lei T."/>
            <person name="Chen C.-S."/>
            <person name="Chen H.-C."/>
            <person name="Xu Z."/>
            <person name="Li H."/>
            <person name="Huang H."/>
            <person name="Zhang F."/>
            <person name="Xu H."/>
            <person name="Li N."/>
            <person name="Zhao C."/>
            <person name="Li S."/>
            <person name="Dong L."/>
            <person name="Huang Y."/>
            <person name="Li L."/>
            <person name="Xi Y."/>
            <person name="Qi Q."/>
            <person name="Li W."/>
            <person name="Zhang B."/>
            <person name="Hu W."/>
            <person name="Zhang Y."/>
            <person name="Tian X."/>
            <person name="Jiao Y."/>
            <person name="Liang X."/>
            <person name="Jin J."/>
            <person name="Gao L."/>
            <person name="Zheng W."/>
            <person name="Hao B."/>
            <person name="Liu S.-M."/>
            <person name="Wang W."/>
            <person name="Yuan L."/>
            <person name="Cao M."/>
            <person name="McDermott J."/>
            <person name="Samudrala R."/>
            <person name="Wang J."/>
            <person name="Wong G.K.-S."/>
            <person name="Yang H."/>
        </authorList>
    </citation>
    <scope>NUCLEOTIDE SEQUENCE [LARGE SCALE GENOMIC DNA]</scope>
    <source>
        <strain>cv. 93-11</strain>
    </source>
</reference>
<reference key="3">
    <citation type="journal article" date="1997" name="Proc. Natl. Acad. Sci. U.S.A.">
        <title>Phytosulfokine-alpha, a sulfated pentapeptide, stimulates the proliferation of rice cells by means of specific high- and low-affinity binding sites.</title>
        <authorList>
            <person name="Matsubayashi Y."/>
            <person name="Takagi L."/>
            <person name="Sakagami Y."/>
        </authorList>
    </citation>
    <scope>PROTEIN SEQUENCE OF PSK-ALPHA AND PSK-BETA</scope>
    <scope>CHARACTERIZATION</scope>
    <scope>SULFATION AT TYR-80 AND TYR-82</scope>
</reference>
<feature type="signal peptide" evidence="1">
    <location>
        <begin position="1"/>
        <end position="22"/>
    </location>
</feature>
<feature type="propeptide" id="PRO_0000300862" evidence="1">
    <location>
        <begin position="23"/>
        <end position="79"/>
    </location>
</feature>
<feature type="peptide" id="PRO_0000300863" description="Phytosulfokine-alpha" evidence="3">
    <location>
        <begin position="80"/>
        <end position="84"/>
    </location>
</feature>
<feature type="peptide" id="PRO_0000300864" description="Phytosulfokine-beta" evidence="3">
    <location>
        <begin position="80"/>
        <end position="83"/>
    </location>
</feature>
<feature type="propeptide" id="PRO_0000300865" evidence="1">
    <location>
        <begin position="85"/>
        <end position="89"/>
    </location>
</feature>
<feature type="region of interest" description="Disordered" evidence="2">
    <location>
        <begin position="33"/>
        <end position="68"/>
    </location>
</feature>
<feature type="modified residue" description="Sulfotyrosine" evidence="3">
    <location>
        <position position="80"/>
    </location>
</feature>
<feature type="modified residue" description="Sulfotyrosine" evidence="3">
    <location>
        <position position="82"/>
    </location>
</feature>
<feature type="glycosylation site" description="N-linked (GlcNAc...) asparagine" evidence="1">
    <location>
        <position position="42"/>
    </location>
</feature>
<comment type="function">
    <text>Promotes plant cell differentiation, organogenesis and somatic embryogenesis as well as cell proliferation.</text>
</comment>
<comment type="subcellular location">
    <subcellularLocation>
        <location>Secreted</location>
    </subcellularLocation>
</comment>
<comment type="tissue specificity">
    <text>Expressed throughout the seedling. More abundant in fragments containing shoot or root apexes where cells proliferate vigorously.</text>
</comment>
<comment type="PTM">
    <text evidence="3">Sulfation is important for activity and for the binding to a putative membrane receptor.</text>
</comment>
<comment type="PTM">
    <text>PSK-alpha is produced by endopeptidase digestion. PSK-beta is produced from PSK-alpha by exopeptidase digestion.</text>
</comment>
<comment type="miscellaneous">
    <text>The N-terminal tripeptide (YIY) is the active core.</text>
</comment>
<comment type="similarity">
    <text evidence="4">Belongs to the phytosulfokine family.</text>
</comment>
<accession>A2YFB4</accession>
<accession>Q67VL3</accession>
<accession>Q9ST21</accession>